<evidence type="ECO:0000255" key="1">
    <source>
        <dbReference type="HAMAP-Rule" id="MF_00531"/>
    </source>
</evidence>
<evidence type="ECO:0000305" key="2"/>
<sequence length="92" mass="10286">MARSLKKGPFADDHLLKKVQAIIDGKAPKKPIKTWSRRSTIFPDFVGLTFAVHNGKQFIEVYVTDDMVGHKLGEFSPTRTFSGHGADKSKKK</sequence>
<proteinExistence type="inferred from homology"/>
<reference key="1">
    <citation type="journal article" date="2005" name="J. Bacteriol.">
        <title>Swine and poultry pathogens: the complete genome sequences of two strains of Mycoplasma hyopneumoniae and a strain of Mycoplasma synoviae.</title>
        <authorList>
            <person name="Vasconcelos A.T.R."/>
            <person name="Ferreira H.B."/>
            <person name="Bizarro C.V."/>
            <person name="Bonatto S.L."/>
            <person name="Carvalho M.O."/>
            <person name="Pinto P.M."/>
            <person name="Almeida D.F."/>
            <person name="Almeida L.G.P."/>
            <person name="Almeida R."/>
            <person name="Alves-Junior L."/>
            <person name="Assuncao E.N."/>
            <person name="Azevedo V.A.C."/>
            <person name="Bogo M.R."/>
            <person name="Brigido M.M."/>
            <person name="Brocchi M."/>
            <person name="Burity H.A."/>
            <person name="Camargo A.A."/>
            <person name="Camargo S.S."/>
            <person name="Carepo M.S."/>
            <person name="Carraro D.M."/>
            <person name="de Mattos Cascardo J.C."/>
            <person name="Castro L.A."/>
            <person name="Cavalcanti G."/>
            <person name="Chemale G."/>
            <person name="Collevatti R.G."/>
            <person name="Cunha C.W."/>
            <person name="Dallagiovanna B."/>
            <person name="Dambros B.P."/>
            <person name="Dellagostin O.A."/>
            <person name="Falcao C."/>
            <person name="Fantinatti-Garboggini F."/>
            <person name="Felipe M.S.S."/>
            <person name="Fiorentin L."/>
            <person name="Franco G.R."/>
            <person name="Freitas N.S.A."/>
            <person name="Frias D."/>
            <person name="Grangeiro T.B."/>
            <person name="Grisard E.C."/>
            <person name="Guimaraes C.T."/>
            <person name="Hungria M."/>
            <person name="Jardim S.N."/>
            <person name="Krieger M.A."/>
            <person name="Laurino J.P."/>
            <person name="Lima L.F.A."/>
            <person name="Lopes M.I."/>
            <person name="Loreto E.L.S."/>
            <person name="Madeira H.M.F."/>
            <person name="Manfio G.P."/>
            <person name="Maranhao A.Q."/>
            <person name="Martinkovics C.T."/>
            <person name="Medeiros S.R.B."/>
            <person name="Moreira M.A.M."/>
            <person name="Neiva M."/>
            <person name="Ramalho-Neto C.E."/>
            <person name="Nicolas M.F."/>
            <person name="Oliveira S.C."/>
            <person name="Paixao R.F.C."/>
            <person name="Pedrosa F.O."/>
            <person name="Pena S.D.J."/>
            <person name="Pereira M."/>
            <person name="Pereira-Ferrari L."/>
            <person name="Piffer I."/>
            <person name="Pinto L.S."/>
            <person name="Potrich D.P."/>
            <person name="Salim A.C.M."/>
            <person name="Santos F.R."/>
            <person name="Schmitt R."/>
            <person name="Schneider M.P.C."/>
            <person name="Schrank A."/>
            <person name="Schrank I.S."/>
            <person name="Schuck A.F."/>
            <person name="Seuanez H.N."/>
            <person name="Silva D.W."/>
            <person name="Silva R."/>
            <person name="Silva S.C."/>
            <person name="Soares C.M.A."/>
            <person name="Souza K.R.L."/>
            <person name="Souza R.C."/>
            <person name="Staats C.C."/>
            <person name="Steffens M.B.R."/>
            <person name="Teixeira S.M.R."/>
            <person name="Urmenyi T.P."/>
            <person name="Vainstein M.H."/>
            <person name="Zuccherato L.W."/>
            <person name="Simpson A.J.G."/>
            <person name="Zaha A."/>
        </authorList>
    </citation>
    <scope>NUCLEOTIDE SEQUENCE [LARGE SCALE GENOMIC DNA]</scope>
    <source>
        <strain>53</strain>
    </source>
</reference>
<protein>
    <recommendedName>
        <fullName evidence="1">Small ribosomal subunit protein uS19</fullName>
    </recommendedName>
    <alternativeName>
        <fullName evidence="2">30S ribosomal protein S19</fullName>
    </alternativeName>
</protein>
<dbReference type="EMBL" id="AE017245">
    <property type="protein sequence ID" value="AAZ44046.1"/>
    <property type="molecule type" value="Genomic_DNA"/>
</dbReference>
<dbReference type="RefSeq" id="WP_011283775.1">
    <property type="nucleotide sequence ID" value="NC_007294.1"/>
</dbReference>
<dbReference type="SMR" id="Q4A5C5"/>
<dbReference type="STRING" id="262723.MS53_0639"/>
<dbReference type="KEGG" id="msy:MS53_0639"/>
<dbReference type="eggNOG" id="COG0185">
    <property type="taxonomic scope" value="Bacteria"/>
</dbReference>
<dbReference type="HOGENOM" id="CLU_144911_0_1_14"/>
<dbReference type="OrthoDB" id="9797833at2"/>
<dbReference type="Proteomes" id="UP000000549">
    <property type="component" value="Chromosome"/>
</dbReference>
<dbReference type="GO" id="GO:0005737">
    <property type="term" value="C:cytoplasm"/>
    <property type="evidence" value="ECO:0007669"/>
    <property type="project" value="UniProtKB-ARBA"/>
</dbReference>
<dbReference type="GO" id="GO:0015935">
    <property type="term" value="C:small ribosomal subunit"/>
    <property type="evidence" value="ECO:0007669"/>
    <property type="project" value="InterPro"/>
</dbReference>
<dbReference type="GO" id="GO:0019843">
    <property type="term" value="F:rRNA binding"/>
    <property type="evidence" value="ECO:0007669"/>
    <property type="project" value="UniProtKB-UniRule"/>
</dbReference>
<dbReference type="GO" id="GO:0003735">
    <property type="term" value="F:structural constituent of ribosome"/>
    <property type="evidence" value="ECO:0007669"/>
    <property type="project" value="InterPro"/>
</dbReference>
<dbReference type="GO" id="GO:0000028">
    <property type="term" value="P:ribosomal small subunit assembly"/>
    <property type="evidence" value="ECO:0007669"/>
    <property type="project" value="TreeGrafter"/>
</dbReference>
<dbReference type="GO" id="GO:0006412">
    <property type="term" value="P:translation"/>
    <property type="evidence" value="ECO:0007669"/>
    <property type="project" value="UniProtKB-UniRule"/>
</dbReference>
<dbReference type="FunFam" id="3.30.860.10:FF:000001">
    <property type="entry name" value="30S ribosomal protein S19"/>
    <property type="match status" value="1"/>
</dbReference>
<dbReference type="Gene3D" id="3.30.860.10">
    <property type="entry name" value="30s Ribosomal Protein S19, Chain A"/>
    <property type="match status" value="1"/>
</dbReference>
<dbReference type="HAMAP" id="MF_00531">
    <property type="entry name" value="Ribosomal_uS19"/>
    <property type="match status" value="1"/>
</dbReference>
<dbReference type="InterPro" id="IPR002222">
    <property type="entry name" value="Ribosomal_uS19"/>
</dbReference>
<dbReference type="InterPro" id="IPR005732">
    <property type="entry name" value="Ribosomal_uS19_bac-type"/>
</dbReference>
<dbReference type="InterPro" id="IPR020934">
    <property type="entry name" value="Ribosomal_uS19_CS"/>
</dbReference>
<dbReference type="InterPro" id="IPR023575">
    <property type="entry name" value="Ribosomal_uS19_SF"/>
</dbReference>
<dbReference type="NCBIfam" id="TIGR01050">
    <property type="entry name" value="rpsS_bact"/>
    <property type="match status" value="1"/>
</dbReference>
<dbReference type="PANTHER" id="PTHR11880">
    <property type="entry name" value="RIBOSOMAL PROTEIN S19P FAMILY MEMBER"/>
    <property type="match status" value="1"/>
</dbReference>
<dbReference type="PANTHER" id="PTHR11880:SF8">
    <property type="entry name" value="SMALL RIBOSOMAL SUBUNIT PROTEIN US19M"/>
    <property type="match status" value="1"/>
</dbReference>
<dbReference type="Pfam" id="PF00203">
    <property type="entry name" value="Ribosomal_S19"/>
    <property type="match status" value="1"/>
</dbReference>
<dbReference type="PIRSF" id="PIRSF002144">
    <property type="entry name" value="Ribosomal_S19"/>
    <property type="match status" value="1"/>
</dbReference>
<dbReference type="PRINTS" id="PR00975">
    <property type="entry name" value="RIBOSOMALS19"/>
</dbReference>
<dbReference type="SUPFAM" id="SSF54570">
    <property type="entry name" value="Ribosomal protein S19"/>
    <property type="match status" value="1"/>
</dbReference>
<dbReference type="PROSITE" id="PS00323">
    <property type="entry name" value="RIBOSOMAL_S19"/>
    <property type="match status" value="1"/>
</dbReference>
<organism>
    <name type="scientific">Mycoplasmopsis synoviae (strain 53)</name>
    <name type="common">Mycoplasma synoviae</name>
    <dbReference type="NCBI Taxonomy" id="262723"/>
    <lineage>
        <taxon>Bacteria</taxon>
        <taxon>Bacillati</taxon>
        <taxon>Mycoplasmatota</taxon>
        <taxon>Mycoplasmoidales</taxon>
        <taxon>Metamycoplasmataceae</taxon>
        <taxon>Mycoplasmopsis</taxon>
    </lineage>
</organism>
<name>RS19_MYCS5</name>
<feature type="chain" id="PRO_0000265386" description="Small ribosomal subunit protein uS19">
    <location>
        <begin position="1"/>
        <end position="92"/>
    </location>
</feature>
<gene>
    <name evidence="1" type="primary">rpsS</name>
    <name type="ordered locus">MS53_0639</name>
</gene>
<keyword id="KW-1185">Reference proteome</keyword>
<keyword id="KW-0687">Ribonucleoprotein</keyword>
<keyword id="KW-0689">Ribosomal protein</keyword>
<keyword id="KW-0694">RNA-binding</keyword>
<keyword id="KW-0699">rRNA-binding</keyword>
<comment type="function">
    <text evidence="1">Protein S19 forms a complex with S13 that binds strongly to the 16S ribosomal RNA.</text>
</comment>
<comment type="similarity">
    <text evidence="1">Belongs to the universal ribosomal protein uS19 family.</text>
</comment>
<accession>Q4A5C5</accession>